<protein>
    <recommendedName>
        <fullName evidence="1">Small ribosomal subunit protein uS3</fullName>
    </recommendedName>
    <alternativeName>
        <fullName evidence="2">30S ribosomal protein S3</fullName>
    </alternativeName>
</protein>
<sequence>MGQKINPIGLRVGVIRDWEAKWYAEKDFASLLHEDLKIRKYIDNALQEASVSHVEIERAANRINIAIHTGKPGMVIGKGGSEIEKLRNKLNSLTNKKVHINVIEIKKVDLDAKLVAENIARQLENRASFRRVQKQAITRAMKIGAKGIKTQVSGRLGGADIARAEQYSEGTVPLHTLRADIGYAHAEADTTYGKLGVKVWIYRGEVLPTKNTSEGGK</sequence>
<keyword id="KW-1185">Reference proteome</keyword>
<keyword id="KW-0687">Ribonucleoprotein</keyword>
<keyword id="KW-0689">Ribosomal protein</keyword>
<keyword id="KW-0694">RNA-binding</keyword>
<keyword id="KW-0699">rRNA-binding</keyword>
<dbReference type="EMBL" id="AP008934">
    <property type="protein sequence ID" value="BAE17814.1"/>
    <property type="molecule type" value="Genomic_DNA"/>
</dbReference>
<dbReference type="RefSeq" id="WP_002482618.1">
    <property type="nucleotide sequence ID" value="NZ_MTGA01000036.1"/>
</dbReference>
<dbReference type="SMR" id="Q49ZG2"/>
<dbReference type="GeneID" id="66866816"/>
<dbReference type="KEGG" id="ssp:SSP0669"/>
<dbReference type="eggNOG" id="COG0092">
    <property type="taxonomic scope" value="Bacteria"/>
</dbReference>
<dbReference type="HOGENOM" id="CLU_058591_0_2_9"/>
<dbReference type="OrthoDB" id="9806396at2"/>
<dbReference type="Proteomes" id="UP000006371">
    <property type="component" value="Chromosome"/>
</dbReference>
<dbReference type="GO" id="GO:0022627">
    <property type="term" value="C:cytosolic small ribosomal subunit"/>
    <property type="evidence" value="ECO:0007669"/>
    <property type="project" value="TreeGrafter"/>
</dbReference>
<dbReference type="GO" id="GO:0003729">
    <property type="term" value="F:mRNA binding"/>
    <property type="evidence" value="ECO:0007669"/>
    <property type="project" value="UniProtKB-UniRule"/>
</dbReference>
<dbReference type="GO" id="GO:0019843">
    <property type="term" value="F:rRNA binding"/>
    <property type="evidence" value="ECO:0007669"/>
    <property type="project" value="UniProtKB-UniRule"/>
</dbReference>
<dbReference type="GO" id="GO:0003735">
    <property type="term" value="F:structural constituent of ribosome"/>
    <property type="evidence" value="ECO:0007669"/>
    <property type="project" value="InterPro"/>
</dbReference>
<dbReference type="GO" id="GO:0006412">
    <property type="term" value="P:translation"/>
    <property type="evidence" value="ECO:0007669"/>
    <property type="project" value="UniProtKB-UniRule"/>
</dbReference>
<dbReference type="CDD" id="cd02412">
    <property type="entry name" value="KH-II_30S_S3"/>
    <property type="match status" value="1"/>
</dbReference>
<dbReference type="FunFam" id="3.30.300.20:FF:000001">
    <property type="entry name" value="30S ribosomal protein S3"/>
    <property type="match status" value="1"/>
</dbReference>
<dbReference type="Gene3D" id="3.30.300.20">
    <property type="match status" value="1"/>
</dbReference>
<dbReference type="Gene3D" id="3.30.1140.32">
    <property type="entry name" value="Ribosomal protein S3, C-terminal domain"/>
    <property type="match status" value="1"/>
</dbReference>
<dbReference type="HAMAP" id="MF_01309_B">
    <property type="entry name" value="Ribosomal_uS3_B"/>
    <property type="match status" value="1"/>
</dbReference>
<dbReference type="InterPro" id="IPR004087">
    <property type="entry name" value="KH_dom"/>
</dbReference>
<dbReference type="InterPro" id="IPR015946">
    <property type="entry name" value="KH_dom-like_a/b"/>
</dbReference>
<dbReference type="InterPro" id="IPR004044">
    <property type="entry name" value="KH_dom_type_2"/>
</dbReference>
<dbReference type="InterPro" id="IPR009019">
    <property type="entry name" value="KH_sf_prok-type"/>
</dbReference>
<dbReference type="InterPro" id="IPR036419">
    <property type="entry name" value="Ribosomal_S3_C_sf"/>
</dbReference>
<dbReference type="InterPro" id="IPR005704">
    <property type="entry name" value="Ribosomal_uS3_bac-typ"/>
</dbReference>
<dbReference type="InterPro" id="IPR001351">
    <property type="entry name" value="Ribosomal_uS3_C"/>
</dbReference>
<dbReference type="NCBIfam" id="TIGR01009">
    <property type="entry name" value="rpsC_bact"/>
    <property type="match status" value="1"/>
</dbReference>
<dbReference type="PANTHER" id="PTHR11760">
    <property type="entry name" value="30S/40S RIBOSOMAL PROTEIN S3"/>
    <property type="match status" value="1"/>
</dbReference>
<dbReference type="PANTHER" id="PTHR11760:SF19">
    <property type="entry name" value="SMALL RIBOSOMAL SUBUNIT PROTEIN US3C"/>
    <property type="match status" value="1"/>
</dbReference>
<dbReference type="Pfam" id="PF07650">
    <property type="entry name" value="KH_2"/>
    <property type="match status" value="1"/>
</dbReference>
<dbReference type="Pfam" id="PF00189">
    <property type="entry name" value="Ribosomal_S3_C"/>
    <property type="match status" value="1"/>
</dbReference>
<dbReference type="SMART" id="SM00322">
    <property type="entry name" value="KH"/>
    <property type="match status" value="1"/>
</dbReference>
<dbReference type="SUPFAM" id="SSF54814">
    <property type="entry name" value="Prokaryotic type KH domain (KH-domain type II)"/>
    <property type="match status" value="1"/>
</dbReference>
<dbReference type="SUPFAM" id="SSF54821">
    <property type="entry name" value="Ribosomal protein S3 C-terminal domain"/>
    <property type="match status" value="1"/>
</dbReference>
<dbReference type="PROSITE" id="PS50823">
    <property type="entry name" value="KH_TYPE_2"/>
    <property type="match status" value="1"/>
</dbReference>
<reference key="1">
    <citation type="journal article" date="2005" name="Proc. Natl. Acad. Sci. U.S.A.">
        <title>Whole genome sequence of Staphylococcus saprophyticus reveals the pathogenesis of uncomplicated urinary tract infection.</title>
        <authorList>
            <person name="Kuroda M."/>
            <person name="Yamashita A."/>
            <person name="Hirakawa H."/>
            <person name="Kumano M."/>
            <person name="Morikawa K."/>
            <person name="Higashide M."/>
            <person name="Maruyama A."/>
            <person name="Inose Y."/>
            <person name="Matoba K."/>
            <person name="Toh H."/>
            <person name="Kuhara S."/>
            <person name="Hattori M."/>
            <person name="Ohta T."/>
        </authorList>
    </citation>
    <scope>NUCLEOTIDE SEQUENCE [LARGE SCALE GENOMIC DNA]</scope>
    <source>
        <strain>ATCC 15305 / DSM 20229 / NCIMB 8711 / NCTC 7292 / S-41</strain>
    </source>
</reference>
<proteinExistence type="inferred from homology"/>
<gene>
    <name evidence="1" type="primary">rpsC</name>
    <name type="ordered locus">SSP0669</name>
</gene>
<comment type="function">
    <text evidence="1">Binds the lower part of the 30S subunit head. Binds mRNA in the 70S ribosome, positioning it for translation.</text>
</comment>
<comment type="subunit">
    <text evidence="1">Part of the 30S ribosomal subunit. Forms a tight complex with proteins S10 and S14.</text>
</comment>
<comment type="similarity">
    <text evidence="1">Belongs to the universal ribosomal protein uS3 family.</text>
</comment>
<feature type="chain" id="PRO_0000230731" description="Small ribosomal subunit protein uS3">
    <location>
        <begin position="1"/>
        <end position="217"/>
    </location>
</feature>
<feature type="domain" description="KH type-2" evidence="1">
    <location>
        <begin position="38"/>
        <end position="106"/>
    </location>
</feature>
<accession>Q49ZG2</accession>
<name>RS3_STAS1</name>
<organism>
    <name type="scientific">Staphylococcus saprophyticus subsp. saprophyticus (strain ATCC 15305 / DSM 20229 / NCIMB 8711 / NCTC 7292 / S-41)</name>
    <dbReference type="NCBI Taxonomy" id="342451"/>
    <lineage>
        <taxon>Bacteria</taxon>
        <taxon>Bacillati</taxon>
        <taxon>Bacillota</taxon>
        <taxon>Bacilli</taxon>
        <taxon>Bacillales</taxon>
        <taxon>Staphylococcaceae</taxon>
        <taxon>Staphylococcus</taxon>
    </lineage>
</organism>
<evidence type="ECO:0000255" key="1">
    <source>
        <dbReference type="HAMAP-Rule" id="MF_01309"/>
    </source>
</evidence>
<evidence type="ECO:0000305" key="2"/>